<dbReference type="EMBL" id="AE001273">
    <property type="protein sequence ID" value="AAC68140.1"/>
    <property type="molecule type" value="Genomic_DNA"/>
</dbReference>
<dbReference type="PIR" id="A71503">
    <property type="entry name" value="A71503"/>
</dbReference>
<dbReference type="RefSeq" id="NP_220053.1">
    <property type="nucleotide sequence ID" value="NC_000117.1"/>
</dbReference>
<dbReference type="RefSeq" id="WP_009871902.1">
    <property type="nucleotide sequence ID" value="NC_000117.1"/>
</dbReference>
<dbReference type="STRING" id="272561.CT_538"/>
<dbReference type="EnsemblBacteria" id="AAC68140">
    <property type="protein sequence ID" value="AAC68140"/>
    <property type="gene ID" value="CT_538"/>
</dbReference>
<dbReference type="GeneID" id="884316"/>
<dbReference type="KEGG" id="ctr:CT_538"/>
<dbReference type="PATRIC" id="fig|272561.5.peg.583"/>
<dbReference type="HOGENOM" id="CLU_1164241_0_0_0"/>
<dbReference type="InParanoid" id="O84543"/>
<dbReference type="OrthoDB" id="20318at2"/>
<dbReference type="Proteomes" id="UP000000431">
    <property type="component" value="Chromosome"/>
</dbReference>
<dbReference type="InterPro" id="IPR024484">
    <property type="entry name" value="DUF2709"/>
</dbReference>
<dbReference type="Pfam" id="PF10915">
    <property type="entry name" value="DUF2709"/>
    <property type="match status" value="1"/>
</dbReference>
<protein>
    <recommendedName>
        <fullName>Uncharacterized protein CT_538</fullName>
    </recommendedName>
</protein>
<name>Y538_CHLTR</name>
<reference key="1">
    <citation type="journal article" date="1998" name="Science">
        <title>Genome sequence of an obligate intracellular pathogen of humans: Chlamydia trachomatis.</title>
        <authorList>
            <person name="Stephens R.S."/>
            <person name="Kalman S."/>
            <person name="Lammel C.J."/>
            <person name="Fan J."/>
            <person name="Marathe R."/>
            <person name="Aravind L."/>
            <person name="Mitchell W.P."/>
            <person name="Olinger L."/>
            <person name="Tatusov R.L."/>
            <person name="Zhao Q."/>
            <person name="Koonin E.V."/>
            <person name="Davis R.W."/>
        </authorList>
    </citation>
    <scope>NUCLEOTIDE SEQUENCE [LARGE SCALE GENOMIC DNA]</scope>
    <source>
        <strain>ATCC VR-885 / DSM 19411 / UW-3/Cx</strain>
    </source>
</reference>
<sequence length="238" mass="27432">MNISGSIKQKLLQFLKKQKSPELLATYLFYLEQSLHLSPVVFVRDKIIFKSAEDAIQLLEADKKIWRETEIQISSGKPEVNEQTKRIYICPFTGKVFADNVYANPQDAIYDWLSSCPQNRERQSGVAVKRFLVSDDPEVIRAYIVPPKEPIIKTVYASAVTGKLFHSLPTLLEDFKTSYLRPMTLEEVQNQNKFQLESSFLTLLQDALEEEKIAEFVESLADDTAFHKYISQWVDTEE</sequence>
<comment type="similarity">
    <text evidence="1">Belongs to the chlamydial CPn_0658/CT_538/TC_0825 family.</text>
</comment>
<gene>
    <name type="ordered locus">CT_538</name>
</gene>
<organism>
    <name type="scientific">Chlamydia trachomatis serovar D (strain ATCC VR-885 / DSM 19411 / UW-3/Cx)</name>
    <dbReference type="NCBI Taxonomy" id="272561"/>
    <lineage>
        <taxon>Bacteria</taxon>
        <taxon>Pseudomonadati</taxon>
        <taxon>Chlamydiota</taxon>
        <taxon>Chlamydiia</taxon>
        <taxon>Chlamydiales</taxon>
        <taxon>Chlamydiaceae</taxon>
        <taxon>Chlamydia/Chlamydophila group</taxon>
        <taxon>Chlamydia</taxon>
    </lineage>
</organism>
<proteinExistence type="inferred from homology"/>
<evidence type="ECO:0000305" key="1"/>
<keyword id="KW-1185">Reference proteome</keyword>
<feature type="chain" id="PRO_0000218408" description="Uncharacterized protein CT_538">
    <location>
        <begin position="1"/>
        <end position="238"/>
    </location>
</feature>
<accession>O84543</accession>